<comment type="function">
    <text evidence="1">Together with the chaperonin GroEL, plays an essential role in assisting protein folding. The GroEL-GroES system forms a nano-cage that allows encapsulation of the non-native substrate proteins and provides a physical environment optimized to promote and accelerate protein folding. GroES binds to the apical surface of the GroEL ring, thereby capping the opening of the GroEL channel.</text>
</comment>
<comment type="subunit">
    <text evidence="1">Heptamer of 7 subunits arranged in a ring. Interacts with the chaperonin GroEL.</text>
</comment>
<comment type="subcellular location">
    <subcellularLocation>
        <location evidence="1">Cytoplasm</location>
    </subcellularLocation>
</comment>
<comment type="similarity">
    <text evidence="1">Belongs to the GroES chaperonin family.</text>
</comment>
<sequence>MNLKPLNDRVLVKRLESEEKTAGGLYIPDTAKEKPSRGEVVAVGPGKHTDDGKLIPMAVKAGDTVLFNKYAGTEVKLDGVEHLVMREDDILAVITGETGRK</sequence>
<name>CH10_LAWIN</name>
<reference key="1">
    <citation type="journal article" date="1998" name="Microbiology">
        <title>Identification and sequencing of the groE operon and flanking genes of Lawsonia intracellularis: use in phylogeny.</title>
        <authorList>
            <person name="Dale C.J.H."/>
            <person name="Moses E.K."/>
            <person name="Ong C.C."/>
            <person name="Morrow C.J."/>
            <person name="Reed M.B."/>
            <person name="Hasse D."/>
            <person name="Strugnell R.A."/>
        </authorList>
    </citation>
    <scope>NUCLEOTIDE SEQUENCE [GENOMIC DNA]</scope>
</reference>
<organism>
    <name type="scientific">Lawsonia intracellularis</name>
    <dbReference type="NCBI Taxonomy" id="29546"/>
    <lineage>
        <taxon>Bacteria</taxon>
        <taxon>Pseudomonadati</taxon>
        <taxon>Thermodesulfobacteriota</taxon>
        <taxon>Desulfovibrionia</taxon>
        <taxon>Desulfovibrionales</taxon>
        <taxon>Desulfovibrionaceae</taxon>
        <taxon>Lawsonia</taxon>
    </lineage>
</organism>
<evidence type="ECO:0000255" key="1">
    <source>
        <dbReference type="HAMAP-Rule" id="MF_00580"/>
    </source>
</evidence>
<keyword id="KW-0143">Chaperone</keyword>
<keyword id="KW-0963">Cytoplasm</keyword>
<gene>
    <name evidence="1" type="primary">groES</name>
    <name evidence="1" type="synonym">groS</name>
</gene>
<feature type="chain" id="PRO_0000174774" description="Co-chaperonin GroES">
    <location>
        <begin position="1"/>
        <end position="101"/>
    </location>
</feature>
<proteinExistence type="inferred from homology"/>
<accession>O87887</accession>
<protein>
    <recommendedName>
        <fullName evidence="1">Co-chaperonin GroES</fullName>
    </recommendedName>
    <alternativeName>
        <fullName evidence="1">10 kDa chaperonin</fullName>
    </alternativeName>
    <alternativeName>
        <fullName evidence="1">Chaperonin-10</fullName>
        <shortName evidence="1">Cpn10</shortName>
    </alternativeName>
</protein>
<dbReference type="EMBL" id="U45241">
    <property type="protein sequence ID" value="AAC36499.1"/>
    <property type="molecule type" value="Genomic_DNA"/>
</dbReference>
<dbReference type="RefSeq" id="WP_011526707.1">
    <property type="nucleotide sequence ID" value="NZ_QNHO01000001.1"/>
</dbReference>
<dbReference type="SMR" id="O87887"/>
<dbReference type="OMA" id="EDFLIMR"/>
<dbReference type="GO" id="GO:0005737">
    <property type="term" value="C:cytoplasm"/>
    <property type="evidence" value="ECO:0007669"/>
    <property type="project" value="UniProtKB-SubCell"/>
</dbReference>
<dbReference type="GO" id="GO:0005524">
    <property type="term" value="F:ATP binding"/>
    <property type="evidence" value="ECO:0007669"/>
    <property type="project" value="InterPro"/>
</dbReference>
<dbReference type="GO" id="GO:0046872">
    <property type="term" value="F:metal ion binding"/>
    <property type="evidence" value="ECO:0007669"/>
    <property type="project" value="TreeGrafter"/>
</dbReference>
<dbReference type="GO" id="GO:0044183">
    <property type="term" value="F:protein folding chaperone"/>
    <property type="evidence" value="ECO:0007669"/>
    <property type="project" value="InterPro"/>
</dbReference>
<dbReference type="GO" id="GO:0051087">
    <property type="term" value="F:protein-folding chaperone binding"/>
    <property type="evidence" value="ECO:0007669"/>
    <property type="project" value="TreeGrafter"/>
</dbReference>
<dbReference type="GO" id="GO:0051082">
    <property type="term" value="F:unfolded protein binding"/>
    <property type="evidence" value="ECO:0007669"/>
    <property type="project" value="TreeGrafter"/>
</dbReference>
<dbReference type="GO" id="GO:0051085">
    <property type="term" value="P:chaperone cofactor-dependent protein refolding"/>
    <property type="evidence" value="ECO:0007669"/>
    <property type="project" value="TreeGrafter"/>
</dbReference>
<dbReference type="CDD" id="cd00320">
    <property type="entry name" value="cpn10"/>
    <property type="match status" value="1"/>
</dbReference>
<dbReference type="FunFam" id="2.30.33.40:FF:000001">
    <property type="entry name" value="10 kDa chaperonin"/>
    <property type="match status" value="1"/>
</dbReference>
<dbReference type="Gene3D" id="2.30.33.40">
    <property type="entry name" value="GroES chaperonin"/>
    <property type="match status" value="1"/>
</dbReference>
<dbReference type="HAMAP" id="MF_00580">
    <property type="entry name" value="CH10"/>
    <property type="match status" value="1"/>
</dbReference>
<dbReference type="InterPro" id="IPR020818">
    <property type="entry name" value="Chaperonin_GroES"/>
</dbReference>
<dbReference type="InterPro" id="IPR037124">
    <property type="entry name" value="Chaperonin_GroES_sf"/>
</dbReference>
<dbReference type="InterPro" id="IPR018369">
    <property type="entry name" value="Chaprnonin_Cpn10_CS"/>
</dbReference>
<dbReference type="InterPro" id="IPR011032">
    <property type="entry name" value="GroES-like_sf"/>
</dbReference>
<dbReference type="NCBIfam" id="NF001527">
    <property type="entry name" value="PRK00364.1-2"/>
    <property type="match status" value="1"/>
</dbReference>
<dbReference type="NCBIfam" id="NF001529">
    <property type="entry name" value="PRK00364.1-5"/>
    <property type="match status" value="1"/>
</dbReference>
<dbReference type="NCBIfam" id="NF001530">
    <property type="entry name" value="PRK00364.1-6"/>
    <property type="match status" value="1"/>
</dbReference>
<dbReference type="NCBIfam" id="NF001531">
    <property type="entry name" value="PRK00364.2-2"/>
    <property type="match status" value="1"/>
</dbReference>
<dbReference type="NCBIfam" id="NF001533">
    <property type="entry name" value="PRK00364.2-4"/>
    <property type="match status" value="1"/>
</dbReference>
<dbReference type="NCBIfam" id="NF001534">
    <property type="entry name" value="PRK00364.2-5"/>
    <property type="match status" value="1"/>
</dbReference>
<dbReference type="PANTHER" id="PTHR10772">
    <property type="entry name" value="10 KDA HEAT SHOCK PROTEIN"/>
    <property type="match status" value="1"/>
</dbReference>
<dbReference type="PANTHER" id="PTHR10772:SF58">
    <property type="entry name" value="CO-CHAPERONIN GROES"/>
    <property type="match status" value="1"/>
</dbReference>
<dbReference type="Pfam" id="PF00166">
    <property type="entry name" value="Cpn10"/>
    <property type="match status" value="1"/>
</dbReference>
<dbReference type="PRINTS" id="PR00297">
    <property type="entry name" value="CHAPERONIN10"/>
</dbReference>
<dbReference type="SMART" id="SM00883">
    <property type="entry name" value="Cpn10"/>
    <property type="match status" value="1"/>
</dbReference>
<dbReference type="SUPFAM" id="SSF50129">
    <property type="entry name" value="GroES-like"/>
    <property type="match status" value="1"/>
</dbReference>
<dbReference type="PROSITE" id="PS00681">
    <property type="entry name" value="CHAPERONINS_CPN10"/>
    <property type="match status" value="1"/>
</dbReference>